<accession>Q1C4Q0</accession>
<comment type="function">
    <text evidence="1">Catalyzes the ferrous insertion into protoporphyrin IX.</text>
</comment>
<comment type="catalytic activity">
    <reaction evidence="1">
        <text>heme b + 2 H(+) = protoporphyrin IX + Fe(2+)</text>
        <dbReference type="Rhea" id="RHEA:22584"/>
        <dbReference type="ChEBI" id="CHEBI:15378"/>
        <dbReference type="ChEBI" id="CHEBI:29033"/>
        <dbReference type="ChEBI" id="CHEBI:57306"/>
        <dbReference type="ChEBI" id="CHEBI:60344"/>
        <dbReference type="EC" id="4.98.1.1"/>
    </reaction>
</comment>
<comment type="pathway">
    <text evidence="1">Porphyrin-containing compound metabolism; protoheme biosynthesis; protoheme from protoporphyrin-IX: step 1/1.</text>
</comment>
<comment type="subcellular location">
    <subcellularLocation>
        <location evidence="1">Cytoplasm</location>
    </subcellularLocation>
</comment>
<comment type="similarity">
    <text evidence="1">Belongs to the ferrochelatase family.</text>
</comment>
<keyword id="KW-0963">Cytoplasm</keyword>
<keyword id="KW-0350">Heme biosynthesis</keyword>
<keyword id="KW-0408">Iron</keyword>
<keyword id="KW-0456">Lyase</keyword>
<keyword id="KW-0479">Metal-binding</keyword>
<keyword id="KW-0627">Porphyrin biosynthesis</keyword>
<proteinExistence type="inferred from homology"/>
<sequence>MMQSKPGVLMVNLGTPDAPTSKAIKRYLAEFLSDRRVVDTSPLLWWPLLHGVILPLRSPRVAKLYQSVWMEEGSPLLVYSRRQQKALAARMPDIPVELGMSYGSPNLPEAIEKLLAQGVTNLVILPLYPQYSCSTSAAVWDAVARVLKGYRRLPSISFIRDYAEHPAYISALKQSVERSFAEHGQPDRLVMSFHGIPKRYAQLGDDYPIRCEDTSRALRAALPLPAEKIIMTYQSRFGREPWLTPYTDETLKSLPSQGVKHIQLICPGFSADCLETLEEIKEQNREFFLHAGGEKFEYIPALNDDEGHIALLEQLIRHNI</sequence>
<reference key="1">
    <citation type="journal article" date="2006" name="J. Bacteriol.">
        <title>Complete genome sequence of Yersinia pestis strains Antiqua and Nepal516: evidence of gene reduction in an emerging pathogen.</title>
        <authorList>
            <person name="Chain P.S.G."/>
            <person name="Hu P."/>
            <person name="Malfatti S.A."/>
            <person name="Radnedge L."/>
            <person name="Larimer F."/>
            <person name="Vergez L.M."/>
            <person name="Worsham P."/>
            <person name="Chu M.C."/>
            <person name="Andersen G.L."/>
        </authorList>
    </citation>
    <scope>NUCLEOTIDE SEQUENCE [LARGE SCALE GENOMIC DNA]</scope>
    <source>
        <strain>Antiqua</strain>
    </source>
</reference>
<name>HEMH_YERPA</name>
<dbReference type="EC" id="4.98.1.1" evidence="1"/>
<dbReference type="EMBL" id="CP000308">
    <property type="protein sequence ID" value="ABG14572.1"/>
    <property type="molecule type" value="Genomic_DNA"/>
</dbReference>
<dbReference type="RefSeq" id="WP_002208599.1">
    <property type="nucleotide sequence ID" value="NZ_CP009906.1"/>
</dbReference>
<dbReference type="SMR" id="Q1C4Q0"/>
<dbReference type="GeneID" id="57975594"/>
<dbReference type="KEGG" id="ypa:YPA_2610"/>
<dbReference type="UniPathway" id="UPA00252">
    <property type="reaction ID" value="UER00325"/>
</dbReference>
<dbReference type="Proteomes" id="UP000001971">
    <property type="component" value="Chromosome"/>
</dbReference>
<dbReference type="GO" id="GO:0005737">
    <property type="term" value="C:cytoplasm"/>
    <property type="evidence" value="ECO:0007669"/>
    <property type="project" value="UniProtKB-SubCell"/>
</dbReference>
<dbReference type="GO" id="GO:0004325">
    <property type="term" value="F:ferrochelatase activity"/>
    <property type="evidence" value="ECO:0007669"/>
    <property type="project" value="UniProtKB-UniRule"/>
</dbReference>
<dbReference type="GO" id="GO:0046872">
    <property type="term" value="F:metal ion binding"/>
    <property type="evidence" value="ECO:0007669"/>
    <property type="project" value="UniProtKB-KW"/>
</dbReference>
<dbReference type="GO" id="GO:0006783">
    <property type="term" value="P:heme biosynthetic process"/>
    <property type="evidence" value="ECO:0007669"/>
    <property type="project" value="UniProtKB-UniRule"/>
</dbReference>
<dbReference type="CDD" id="cd00419">
    <property type="entry name" value="Ferrochelatase_C"/>
    <property type="match status" value="1"/>
</dbReference>
<dbReference type="CDD" id="cd03411">
    <property type="entry name" value="Ferrochelatase_N"/>
    <property type="match status" value="1"/>
</dbReference>
<dbReference type="FunFam" id="3.40.50.1400:FF:000004">
    <property type="entry name" value="Ferrochelatase"/>
    <property type="match status" value="1"/>
</dbReference>
<dbReference type="Gene3D" id="3.40.50.1400">
    <property type="match status" value="2"/>
</dbReference>
<dbReference type="HAMAP" id="MF_00323">
    <property type="entry name" value="Ferrochelatase"/>
    <property type="match status" value="1"/>
</dbReference>
<dbReference type="InterPro" id="IPR001015">
    <property type="entry name" value="Ferrochelatase"/>
</dbReference>
<dbReference type="InterPro" id="IPR019772">
    <property type="entry name" value="Ferrochelatase_AS"/>
</dbReference>
<dbReference type="InterPro" id="IPR033644">
    <property type="entry name" value="Ferrochelatase_C"/>
</dbReference>
<dbReference type="InterPro" id="IPR033659">
    <property type="entry name" value="Ferrochelatase_N"/>
</dbReference>
<dbReference type="NCBIfam" id="TIGR00109">
    <property type="entry name" value="hemH"/>
    <property type="match status" value="1"/>
</dbReference>
<dbReference type="PANTHER" id="PTHR11108">
    <property type="entry name" value="FERROCHELATASE"/>
    <property type="match status" value="1"/>
</dbReference>
<dbReference type="PANTHER" id="PTHR11108:SF1">
    <property type="entry name" value="FERROCHELATASE, MITOCHONDRIAL"/>
    <property type="match status" value="1"/>
</dbReference>
<dbReference type="Pfam" id="PF00762">
    <property type="entry name" value="Ferrochelatase"/>
    <property type="match status" value="1"/>
</dbReference>
<dbReference type="SUPFAM" id="SSF53800">
    <property type="entry name" value="Chelatase"/>
    <property type="match status" value="1"/>
</dbReference>
<dbReference type="PROSITE" id="PS00534">
    <property type="entry name" value="FERROCHELATASE"/>
    <property type="match status" value="1"/>
</dbReference>
<gene>
    <name evidence="1" type="primary">hemH</name>
    <name type="ordered locus">YPA_2610</name>
</gene>
<organism>
    <name type="scientific">Yersinia pestis bv. Antiqua (strain Antiqua)</name>
    <dbReference type="NCBI Taxonomy" id="360102"/>
    <lineage>
        <taxon>Bacteria</taxon>
        <taxon>Pseudomonadati</taxon>
        <taxon>Pseudomonadota</taxon>
        <taxon>Gammaproteobacteria</taxon>
        <taxon>Enterobacterales</taxon>
        <taxon>Yersiniaceae</taxon>
        <taxon>Yersinia</taxon>
    </lineage>
</organism>
<protein>
    <recommendedName>
        <fullName evidence="1">Ferrochelatase</fullName>
        <ecNumber evidence="1">4.98.1.1</ecNumber>
    </recommendedName>
    <alternativeName>
        <fullName evidence="1">Heme synthase</fullName>
    </alternativeName>
    <alternativeName>
        <fullName evidence="1">Protoheme ferro-lyase</fullName>
    </alternativeName>
</protein>
<feature type="chain" id="PRO_1000019386" description="Ferrochelatase">
    <location>
        <begin position="1"/>
        <end position="320"/>
    </location>
</feature>
<feature type="binding site" evidence="1">
    <location>
        <position position="194"/>
    </location>
    <ligand>
        <name>Fe cation</name>
        <dbReference type="ChEBI" id="CHEBI:24875"/>
    </ligand>
</feature>
<feature type="binding site" evidence="1">
    <location>
        <position position="275"/>
    </location>
    <ligand>
        <name>Fe cation</name>
        <dbReference type="ChEBI" id="CHEBI:24875"/>
    </ligand>
</feature>
<evidence type="ECO:0000255" key="1">
    <source>
        <dbReference type="HAMAP-Rule" id="MF_00323"/>
    </source>
</evidence>